<proteinExistence type="inferred from homology"/>
<sequence length="119" mass="12904">MVKWAVSILVNALLLIVIDGYIDSIHISSIGAAIIASLILSILNVLIKPLLIIFTLPVTMVTLGLFLFVINAITLMMTASIMGDSFQIDGFGTAIWASVILSVFHLLIQKGILEPLRKK</sequence>
<dbReference type="EMBL" id="AF017113">
    <property type="protein sequence ID" value="AAC67276.1"/>
    <property type="molecule type" value="Genomic_DNA"/>
</dbReference>
<dbReference type="EMBL" id="AL009126">
    <property type="protein sequence ID" value="CAB15515.1"/>
    <property type="molecule type" value="Genomic_DNA"/>
</dbReference>
<dbReference type="PIR" id="F70043">
    <property type="entry name" value="F70043"/>
</dbReference>
<dbReference type="RefSeq" id="NP_391390.1">
    <property type="nucleotide sequence ID" value="NC_000964.3"/>
</dbReference>
<dbReference type="RefSeq" id="WP_003228066.1">
    <property type="nucleotide sequence ID" value="NZ_OZ025638.1"/>
</dbReference>
<dbReference type="FunCoup" id="O34648">
    <property type="interactions" value="11"/>
</dbReference>
<dbReference type="STRING" id="224308.BSU35100"/>
<dbReference type="PaxDb" id="224308-BSU35100"/>
<dbReference type="EnsemblBacteria" id="CAB15515">
    <property type="protein sequence ID" value="CAB15515"/>
    <property type="gene ID" value="BSU_35100"/>
</dbReference>
<dbReference type="GeneID" id="936638"/>
<dbReference type="KEGG" id="bsu:BSU35100"/>
<dbReference type="PATRIC" id="fig|224308.179.peg.3800"/>
<dbReference type="eggNOG" id="COG1950">
    <property type="taxonomic scope" value="Bacteria"/>
</dbReference>
<dbReference type="InParanoid" id="O34648"/>
<dbReference type="OrthoDB" id="7205479at2"/>
<dbReference type="PhylomeDB" id="O34648"/>
<dbReference type="BioCyc" id="BSUB:BSU35100-MONOMER"/>
<dbReference type="Proteomes" id="UP000001570">
    <property type="component" value="Chromosome"/>
</dbReference>
<dbReference type="GO" id="GO:0005886">
    <property type="term" value="C:plasma membrane"/>
    <property type="evidence" value="ECO:0007669"/>
    <property type="project" value="UniProtKB-SubCell"/>
</dbReference>
<dbReference type="InterPro" id="IPR007165">
    <property type="entry name" value="Phage_holin_4_2"/>
</dbReference>
<dbReference type="PANTHER" id="PTHR37309">
    <property type="entry name" value="SLR0284 PROTEIN"/>
    <property type="match status" value="1"/>
</dbReference>
<dbReference type="PANTHER" id="PTHR37309:SF1">
    <property type="entry name" value="SLR0284 PROTEIN"/>
    <property type="match status" value="1"/>
</dbReference>
<dbReference type="Pfam" id="PF04020">
    <property type="entry name" value="Phage_holin_4_2"/>
    <property type="match status" value="1"/>
</dbReference>
<gene>
    <name type="primary">yvlD</name>
    <name type="ordered locus">BSU35100</name>
</gene>
<keyword id="KW-1003">Cell membrane</keyword>
<keyword id="KW-0472">Membrane</keyword>
<keyword id="KW-1185">Reference proteome</keyword>
<keyword id="KW-0732">Signal</keyword>
<keyword id="KW-0812">Transmembrane</keyword>
<keyword id="KW-1133">Transmembrane helix</keyword>
<reference key="1">
    <citation type="submission" date="1997-08" db="EMBL/GenBank/DDBJ databases">
        <title>Nucleotide sequence of the 300-304 chromosomal segment of Bacillus subtilis.</title>
        <authorList>
            <person name="Lazarevic V."/>
            <person name="Soldo B."/>
            <person name="Rivolta C."/>
            <person name="Reynolds S."/>
            <person name="Mauel C."/>
            <person name="Karamata D."/>
        </authorList>
    </citation>
    <scope>NUCLEOTIDE SEQUENCE [GENOMIC DNA]</scope>
</reference>
<reference key="2">
    <citation type="journal article" date="1997" name="Nature">
        <title>The complete genome sequence of the Gram-positive bacterium Bacillus subtilis.</title>
        <authorList>
            <person name="Kunst F."/>
            <person name="Ogasawara N."/>
            <person name="Moszer I."/>
            <person name="Albertini A.M."/>
            <person name="Alloni G."/>
            <person name="Azevedo V."/>
            <person name="Bertero M.G."/>
            <person name="Bessieres P."/>
            <person name="Bolotin A."/>
            <person name="Borchert S."/>
            <person name="Borriss R."/>
            <person name="Boursier L."/>
            <person name="Brans A."/>
            <person name="Braun M."/>
            <person name="Brignell S.C."/>
            <person name="Bron S."/>
            <person name="Brouillet S."/>
            <person name="Bruschi C.V."/>
            <person name="Caldwell B."/>
            <person name="Capuano V."/>
            <person name="Carter N.M."/>
            <person name="Choi S.-K."/>
            <person name="Codani J.-J."/>
            <person name="Connerton I.F."/>
            <person name="Cummings N.J."/>
            <person name="Daniel R.A."/>
            <person name="Denizot F."/>
            <person name="Devine K.M."/>
            <person name="Duesterhoeft A."/>
            <person name="Ehrlich S.D."/>
            <person name="Emmerson P.T."/>
            <person name="Entian K.-D."/>
            <person name="Errington J."/>
            <person name="Fabret C."/>
            <person name="Ferrari E."/>
            <person name="Foulger D."/>
            <person name="Fritz C."/>
            <person name="Fujita M."/>
            <person name="Fujita Y."/>
            <person name="Fuma S."/>
            <person name="Galizzi A."/>
            <person name="Galleron N."/>
            <person name="Ghim S.-Y."/>
            <person name="Glaser P."/>
            <person name="Goffeau A."/>
            <person name="Golightly E.J."/>
            <person name="Grandi G."/>
            <person name="Guiseppi G."/>
            <person name="Guy B.J."/>
            <person name="Haga K."/>
            <person name="Haiech J."/>
            <person name="Harwood C.R."/>
            <person name="Henaut A."/>
            <person name="Hilbert H."/>
            <person name="Holsappel S."/>
            <person name="Hosono S."/>
            <person name="Hullo M.-F."/>
            <person name="Itaya M."/>
            <person name="Jones L.-M."/>
            <person name="Joris B."/>
            <person name="Karamata D."/>
            <person name="Kasahara Y."/>
            <person name="Klaerr-Blanchard M."/>
            <person name="Klein C."/>
            <person name="Kobayashi Y."/>
            <person name="Koetter P."/>
            <person name="Koningstein G."/>
            <person name="Krogh S."/>
            <person name="Kumano M."/>
            <person name="Kurita K."/>
            <person name="Lapidus A."/>
            <person name="Lardinois S."/>
            <person name="Lauber J."/>
            <person name="Lazarevic V."/>
            <person name="Lee S.-M."/>
            <person name="Levine A."/>
            <person name="Liu H."/>
            <person name="Masuda S."/>
            <person name="Mauel C."/>
            <person name="Medigue C."/>
            <person name="Medina N."/>
            <person name="Mellado R.P."/>
            <person name="Mizuno M."/>
            <person name="Moestl D."/>
            <person name="Nakai S."/>
            <person name="Noback M."/>
            <person name="Noone D."/>
            <person name="O'Reilly M."/>
            <person name="Ogawa K."/>
            <person name="Ogiwara A."/>
            <person name="Oudega B."/>
            <person name="Park S.-H."/>
            <person name="Parro V."/>
            <person name="Pohl T.M."/>
            <person name="Portetelle D."/>
            <person name="Porwollik S."/>
            <person name="Prescott A.M."/>
            <person name="Presecan E."/>
            <person name="Pujic P."/>
            <person name="Purnelle B."/>
            <person name="Rapoport G."/>
            <person name="Rey M."/>
            <person name="Reynolds S."/>
            <person name="Rieger M."/>
            <person name="Rivolta C."/>
            <person name="Rocha E."/>
            <person name="Roche B."/>
            <person name="Rose M."/>
            <person name="Sadaie Y."/>
            <person name="Sato T."/>
            <person name="Scanlan E."/>
            <person name="Schleich S."/>
            <person name="Schroeter R."/>
            <person name="Scoffone F."/>
            <person name="Sekiguchi J."/>
            <person name="Sekowska A."/>
            <person name="Seror S.J."/>
            <person name="Serror P."/>
            <person name="Shin B.-S."/>
            <person name="Soldo B."/>
            <person name="Sorokin A."/>
            <person name="Tacconi E."/>
            <person name="Takagi T."/>
            <person name="Takahashi H."/>
            <person name="Takemaru K."/>
            <person name="Takeuchi M."/>
            <person name="Tamakoshi A."/>
            <person name="Tanaka T."/>
            <person name="Terpstra P."/>
            <person name="Tognoni A."/>
            <person name="Tosato V."/>
            <person name="Uchiyama S."/>
            <person name="Vandenbol M."/>
            <person name="Vannier F."/>
            <person name="Vassarotti A."/>
            <person name="Viari A."/>
            <person name="Wambutt R."/>
            <person name="Wedler E."/>
            <person name="Wedler H."/>
            <person name="Weitzenegger T."/>
            <person name="Winters P."/>
            <person name="Wipat A."/>
            <person name="Yamamoto H."/>
            <person name="Yamane K."/>
            <person name="Yasumoto K."/>
            <person name="Yata K."/>
            <person name="Yoshida K."/>
            <person name="Yoshikawa H.-F."/>
            <person name="Zumstein E."/>
            <person name="Yoshikawa H."/>
            <person name="Danchin A."/>
        </authorList>
    </citation>
    <scope>NUCLEOTIDE SEQUENCE [LARGE SCALE GENOMIC DNA]</scope>
    <source>
        <strain>168</strain>
    </source>
</reference>
<protein>
    <recommendedName>
        <fullName>Uncharacterized membrane protein YvlD</fullName>
    </recommendedName>
</protein>
<feature type="signal peptide" evidence="1">
    <location>
        <begin position="1"/>
        <end position="23"/>
    </location>
</feature>
<feature type="chain" id="PRO_0000388348" description="Uncharacterized membrane protein YvlD">
    <location>
        <begin position="24"/>
        <end position="119"/>
    </location>
</feature>
<feature type="transmembrane region" description="Helical" evidence="1">
    <location>
        <begin position="27"/>
        <end position="47"/>
    </location>
</feature>
<feature type="transmembrane region" description="Helical" evidence="1">
    <location>
        <begin position="50"/>
        <end position="70"/>
    </location>
</feature>
<feature type="transmembrane region" description="Helical" evidence="1">
    <location>
        <begin position="88"/>
        <end position="108"/>
    </location>
</feature>
<organism>
    <name type="scientific">Bacillus subtilis (strain 168)</name>
    <dbReference type="NCBI Taxonomy" id="224308"/>
    <lineage>
        <taxon>Bacteria</taxon>
        <taxon>Bacillati</taxon>
        <taxon>Bacillota</taxon>
        <taxon>Bacilli</taxon>
        <taxon>Bacillales</taxon>
        <taxon>Bacillaceae</taxon>
        <taxon>Bacillus</taxon>
    </lineage>
</organism>
<evidence type="ECO:0000255" key="1"/>
<evidence type="ECO:0000305" key="2"/>
<comment type="subcellular location">
    <subcellularLocation>
        <location evidence="2">Cell membrane</location>
        <topology evidence="2">Multi-pass membrane protein</topology>
    </subcellularLocation>
</comment>
<accession>O34648</accession>
<accession>Q795E4</accession>
<name>YVLD_BACSU</name>